<gene>
    <name evidence="1" type="primary">lgt</name>
    <name type="ordered locus">Ecok1_27860</name>
    <name type="ORF">APECO1_3677</name>
</gene>
<organism>
    <name type="scientific">Escherichia coli O1:K1 / APEC</name>
    <dbReference type="NCBI Taxonomy" id="405955"/>
    <lineage>
        <taxon>Bacteria</taxon>
        <taxon>Pseudomonadati</taxon>
        <taxon>Pseudomonadota</taxon>
        <taxon>Gammaproteobacteria</taxon>
        <taxon>Enterobacterales</taxon>
        <taxon>Enterobacteriaceae</taxon>
        <taxon>Escherichia</taxon>
    </lineage>
</organism>
<name>LGT_ECOK1</name>
<keyword id="KW-0997">Cell inner membrane</keyword>
<keyword id="KW-1003">Cell membrane</keyword>
<keyword id="KW-0472">Membrane</keyword>
<keyword id="KW-1185">Reference proteome</keyword>
<keyword id="KW-0808">Transferase</keyword>
<keyword id="KW-0812">Transmembrane</keyword>
<keyword id="KW-1133">Transmembrane helix</keyword>
<protein>
    <recommendedName>
        <fullName evidence="1">Phosphatidylglycerol--prolipoprotein diacylglyceryl transferase</fullName>
        <ecNumber evidence="1">2.5.1.145</ecNumber>
    </recommendedName>
</protein>
<reference key="1">
    <citation type="journal article" date="2007" name="J. Bacteriol.">
        <title>The genome sequence of avian pathogenic Escherichia coli strain O1:K1:H7 shares strong similarities with human extraintestinal pathogenic E. coli genomes.</title>
        <authorList>
            <person name="Johnson T.J."/>
            <person name="Kariyawasam S."/>
            <person name="Wannemuehler Y."/>
            <person name="Mangiamele P."/>
            <person name="Johnson S.J."/>
            <person name="Doetkott C."/>
            <person name="Skyberg J.A."/>
            <person name="Lynne A.M."/>
            <person name="Johnson J.R."/>
            <person name="Nolan L.K."/>
        </authorList>
    </citation>
    <scope>NUCLEOTIDE SEQUENCE [LARGE SCALE GENOMIC DNA]</scope>
</reference>
<evidence type="ECO:0000255" key="1">
    <source>
        <dbReference type="HAMAP-Rule" id="MF_01147"/>
    </source>
</evidence>
<feature type="chain" id="PRO_1000053424" description="Phosphatidylglycerol--prolipoprotein diacylglyceryl transferase">
    <location>
        <begin position="1"/>
        <end position="291"/>
    </location>
</feature>
<feature type="transmembrane region" description="Helical" evidence="1">
    <location>
        <begin position="21"/>
        <end position="41"/>
    </location>
</feature>
<feature type="transmembrane region" description="Helical" evidence="1">
    <location>
        <begin position="60"/>
        <end position="80"/>
    </location>
</feature>
<feature type="transmembrane region" description="Helical" evidence="1">
    <location>
        <begin position="96"/>
        <end position="116"/>
    </location>
</feature>
<feature type="transmembrane region" description="Helical" evidence="1">
    <location>
        <begin position="225"/>
        <end position="245"/>
    </location>
</feature>
<feature type="transmembrane region" description="Helical" evidence="1">
    <location>
        <begin position="260"/>
        <end position="280"/>
    </location>
</feature>
<feature type="binding site" evidence="1">
    <location>
        <position position="143"/>
    </location>
    <ligand>
        <name>a 1,2-diacyl-sn-glycero-3-phospho-(1'-sn-glycerol)</name>
        <dbReference type="ChEBI" id="CHEBI:64716"/>
    </ligand>
</feature>
<proteinExistence type="inferred from homology"/>
<dbReference type="EC" id="2.5.1.145" evidence="1"/>
<dbReference type="EMBL" id="CP000468">
    <property type="protein sequence ID" value="ABJ02280.1"/>
    <property type="molecule type" value="Genomic_DNA"/>
</dbReference>
<dbReference type="RefSeq" id="WP_000204658.1">
    <property type="nucleotide sequence ID" value="NZ_CADILS010000010.1"/>
</dbReference>
<dbReference type="SMR" id="A1AF40"/>
<dbReference type="GeneID" id="93779170"/>
<dbReference type="KEGG" id="ecv:APECO1_3677"/>
<dbReference type="HOGENOM" id="CLU_013386_1_0_6"/>
<dbReference type="UniPathway" id="UPA00664"/>
<dbReference type="Proteomes" id="UP000008216">
    <property type="component" value="Chromosome"/>
</dbReference>
<dbReference type="GO" id="GO:0005886">
    <property type="term" value="C:plasma membrane"/>
    <property type="evidence" value="ECO:0007669"/>
    <property type="project" value="UniProtKB-SubCell"/>
</dbReference>
<dbReference type="GO" id="GO:0008961">
    <property type="term" value="F:phosphatidylglycerol-prolipoprotein diacylglyceryl transferase activity"/>
    <property type="evidence" value="ECO:0007669"/>
    <property type="project" value="UniProtKB-UniRule"/>
</dbReference>
<dbReference type="GO" id="GO:0042158">
    <property type="term" value="P:lipoprotein biosynthetic process"/>
    <property type="evidence" value="ECO:0007669"/>
    <property type="project" value="UniProtKB-UniRule"/>
</dbReference>
<dbReference type="HAMAP" id="MF_01147">
    <property type="entry name" value="Lgt"/>
    <property type="match status" value="1"/>
</dbReference>
<dbReference type="InterPro" id="IPR001640">
    <property type="entry name" value="Lgt"/>
</dbReference>
<dbReference type="NCBIfam" id="TIGR00544">
    <property type="entry name" value="lgt"/>
    <property type="match status" value="1"/>
</dbReference>
<dbReference type="PANTHER" id="PTHR30589:SF0">
    <property type="entry name" value="PHOSPHATIDYLGLYCEROL--PROLIPOPROTEIN DIACYLGLYCERYL TRANSFERASE"/>
    <property type="match status" value="1"/>
</dbReference>
<dbReference type="PANTHER" id="PTHR30589">
    <property type="entry name" value="PROLIPOPROTEIN DIACYLGLYCERYL TRANSFERASE"/>
    <property type="match status" value="1"/>
</dbReference>
<dbReference type="Pfam" id="PF01790">
    <property type="entry name" value="LGT"/>
    <property type="match status" value="1"/>
</dbReference>
<dbReference type="PROSITE" id="PS01311">
    <property type="entry name" value="LGT"/>
    <property type="match status" value="1"/>
</dbReference>
<accession>A1AF40</accession>
<comment type="function">
    <text evidence="1">Catalyzes the transfer of the diacylglyceryl group from phosphatidylglycerol to the sulfhydryl group of the N-terminal cysteine of a prolipoprotein, the first step in the formation of mature lipoproteins.</text>
</comment>
<comment type="catalytic activity">
    <reaction evidence="1">
        <text>L-cysteinyl-[prolipoprotein] + a 1,2-diacyl-sn-glycero-3-phospho-(1'-sn-glycerol) = an S-1,2-diacyl-sn-glyceryl-L-cysteinyl-[prolipoprotein] + sn-glycerol 1-phosphate + H(+)</text>
        <dbReference type="Rhea" id="RHEA:56712"/>
        <dbReference type="Rhea" id="RHEA-COMP:14679"/>
        <dbReference type="Rhea" id="RHEA-COMP:14680"/>
        <dbReference type="ChEBI" id="CHEBI:15378"/>
        <dbReference type="ChEBI" id="CHEBI:29950"/>
        <dbReference type="ChEBI" id="CHEBI:57685"/>
        <dbReference type="ChEBI" id="CHEBI:64716"/>
        <dbReference type="ChEBI" id="CHEBI:140658"/>
        <dbReference type="EC" id="2.5.1.145"/>
    </reaction>
</comment>
<comment type="pathway">
    <text evidence="1">Protein modification; lipoprotein biosynthesis (diacylglyceryl transfer).</text>
</comment>
<comment type="subcellular location">
    <subcellularLocation>
        <location evidence="1">Cell inner membrane</location>
        <topology evidence="1">Multi-pass membrane protein</topology>
    </subcellularLocation>
</comment>
<comment type="similarity">
    <text evidence="1">Belongs to the Lgt family.</text>
</comment>
<sequence>MTSSYLHFPEFDPVIFSIGPVALHWYGLMYLVGFIFAMWLATRRANRPGSGWTKNEVENLLYAGFLGVFLGGRIGYVLFYNFPQFMADPLYLFRVWDGGMSFHGGLIGVIVVMIIFARRTKRSFFQVSDFIAPLIPFGLGAGRLGNFINGELWGRVDPNFPFAMLFPGSRTEDILLLQTNPQWQSIFDTYGVLPRHPSQLYELLLEGVVLFIILNLYIRKPRPMGAVSGLFLIGYGAFRIIVEFFRQPDAQFTGAWVQYISMGQILSIPMIVAGVIMMVWAYRRSPQQHVS</sequence>